<keyword id="KW-0426">Late protein</keyword>
<keyword id="KW-1185">Reference proteome</keyword>
<keyword id="KW-1226">Viral baseplate protein</keyword>
<keyword id="KW-1227">Viral tail protein</keyword>
<keyword id="KW-0946">Virion</keyword>
<organism>
    <name type="scientific">Escherichia phage P2</name>
    <name type="common">Bacteriophage P2</name>
    <dbReference type="NCBI Taxonomy" id="2905681"/>
    <lineage>
        <taxon>Viruses</taxon>
        <taxon>Duplodnaviria</taxon>
        <taxon>Heunggongvirae</taxon>
        <taxon>Uroviricota</taxon>
        <taxon>Caudoviricetes</taxon>
        <taxon>Peduoviridae</taxon>
        <taxon>Peduovirus</taxon>
        <taxon>Peduovirus P2</taxon>
    </lineage>
</organism>
<organismHost>
    <name type="scientific">Enterobacteriaceae</name>
    <dbReference type="NCBI Taxonomy" id="543"/>
</organismHost>
<feature type="chain" id="PRO_0000165254" description="Baseplate protein J">
    <location>
        <begin position="1"/>
        <end position="302"/>
    </location>
</feature>
<reference key="1">
    <citation type="journal article" date="1995" name="Virology">
        <title>Bacteriophage P2: genes involved in baseplate assembly.</title>
        <authorList>
            <person name="Haggaard-Ljungquist E."/>
            <person name="Jacobsen E."/>
            <person name="Rishovd S."/>
            <person name="Six E.W."/>
            <person name="Nilssen O."/>
            <person name="Sunshine M.G."/>
            <person name="Lindqvist B.H."/>
            <person name="Kim K.-J."/>
            <person name="Barreiro V."/>
            <person name="Koonin E.V."/>
            <person name="Calendar R."/>
        </authorList>
    </citation>
    <scope>NUCLEOTIDE SEQUENCE [GENOMIC DNA]</scope>
    <scope>SUBCELLULAR LOCATION</scope>
</reference>
<reference key="2">
    <citation type="journal article" date="2012" name="Adv. Exp. Med. Biol.">
        <title>Contractile tail machines of bacteriophages.</title>
        <authorList>
            <person name="Leiman P.G."/>
            <person name="Shneider M.M."/>
        </authorList>
    </citation>
    <scope>REVIEW ON FUNCTION</scope>
</reference>
<proteinExistence type="inferred from homology"/>
<sequence>MPIIDLNQLPAPDVVEELDFESILAERKATLISLYPEDQQEAVARTLTLESEPLVKLLEENAYRELIWRQRVNEAARAVMLACAAGNDLDVIGANYNTTRLTITPADDSTIPPTPAVMESDTDYRLRIQQAFEGLSVAGSVGAYQYHGRSADGRVADISVTSPSPACVTISVLSRENNGVASEDLLAVVRNALNGEDVRPVADRVTVQSAAIVEYQINATLYLYPGPESEPIRAAAVKKLEAYITAQHRLGRDIRLSAIYAALHVEGVQRVELAAPLADIVLNSTQASFCTEYRVVTGGSDE</sequence>
<accession>P51767</accession>
<dbReference type="EMBL" id="AF063097">
    <property type="protein sequence ID" value="AAD03284.1"/>
    <property type="molecule type" value="Genomic_DNA"/>
</dbReference>
<dbReference type="RefSeq" id="NP_046773.1">
    <property type="nucleotide sequence ID" value="NC_001895.1"/>
</dbReference>
<dbReference type="SMR" id="P51767"/>
<dbReference type="GeneID" id="77440808"/>
<dbReference type="KEGG" id="vg:77440808"/>
<dbReference type="Proteomes" id="UP000009092">
    <property type="component" value="Genome"/>
</dbReference>
<dbReference type="GO" id="GO:0098025">
    <property type="term" value="C:virus tail, baseplate"/>
    <property type="evidence" value="ECO:0000314"/>
    <property type="project" value="CACAO"/>
</dbReference>
<dbReference type="InterPro" id="IPR014507">
    <property type="entry name" value="Baseplate_assembly_J_pred"/>
</dbReference>
<dbReference type="InterPro" id="IPR006949">
    <property type="entry name" value="Baseplate_J-like"/>
</dbReference>
<dbReference type="InterPro" id="IPR052726">
    <property type="entry name" value="Phage_Baseplate_Hub"/>
</dbReference>
<dbReference type="PANTHER" id="PTHR35862">
    <property type="entry name" value="FELS-2 PROPHAGE PROTEIN"/>
    <property type="match status" value="1"/>
</dbReference>
<dbReference type="PANTHER" id="PTHR35862:SF1">
    <property type="entry name" value="FELS-2 PROPHAGE PROTEIN"/>
    <property type="match status" value="1"/>
</dbReference>
<dbReference type="Pfam" id="PF04865">
    <property type="entry name" value="Baseplate_J"/>
    <property type="match status" value="1"/>
</dbReference>
<dbReference type="PIRSF" id="PIRSF020481">
    <property type="entry name" value="BAP"/>
    <property type="match status" value="1"/>
</dbReference>
<gene>
    <name type="primary">J</name>
</gene>
<comment type="function">
    <text evidence="2">Baseplate protein that may be part of the wedges of the baseplate.</text>
</comment>
<comment type="subcellular location">
    <subcellularLocation>
        <location evidence="1">Virion</location>
    </subcellularLocation>
    <text evidence="1">Part of the baseplate.</text>
</comment>
<comment type="induction">
    <text evidence="3">Expressed in the late phase of the viral replicative cycle.</text>
</comment>
<comment type="similarity">
    <text evidence="3">Belongs to the P2likevirus gpJ protein family.</text>
</comment>
<name>BPJ_BPP2</name>
<protein>
    <recommendedName>
        <fullName evidence="3">Baseplate protein J</fullName>
    </recommendedName>
    <alternativeName>
        <fullName evidence="3">Gene J protein</fullName>
    </alternativeName>
    <alternativeName>
        <fullName>GpJ</fullName>
    </alternativeName>
</protein>
<evidence type="ECO:0000269" key="1">
    <source>
    </source>
</evidence>
<evidence type="ECO:0000303" key="2">
    <source>
    </source>
</evidence>
<evidence type="ECO:0000305" key="3"/>